<feature type="chain" id="PRO_0000456006" description="Short chain dehydrogenase pgmD">
    <location>
        <begin position="1"/>
        <end position="312"/>
    </location>
</feature>
<feature type="active site" description="Proton donor" evidence="2">
    <location>
        <position position="207"/>
    </location>
</feature>
<feature type="active site" description="Lowers pKa of active site Tyr" evidence="2">
    <location>
        <position position="211"/>
    </location>
</feature>
<feature type="binding site" evidence="1">
    <location>
        <position position="46"/>
    </location>
    <ligand>
        <name>NADP(+)</name>
        <dbReference type="ChEBI" id="CHEBI:58349"/>
    </ligand>
</feature>
<feature type="binding site" evidence="1">
    <location>
        <position position="47"/>
    </location>
    <ligand>
        <name>NADP(+)</name>
        <dbReference type="ChEBI" id="CHEBI:58349"/>
    </ligand>
</feature>
<feature type="binding site" evidence="1">
    <location>
        <position position="171"/>
    </location>
    <ligand>
        <name>NADP(+)</name>
        <dbReference type="ChEBI" id="CHEBI:58349"/>
    </ligand>
</feature>
<feature type="binding site" evidence="2">
    <location>
        <position position="207"/>
    </location>
    <ligand>
        <name>NADP(+)</name>
        <dbReference type="ChEBI" id="CHEBI:58349"/>
    </ligand>
</feature>
<feature type="binding site" evidence="2">
    <location>
        <position position="211"/>
    </location>
    <ligand>
        <name>NADP(+)</name>
        <dbReference type="ChEBI" id="CHEBI:58349"/>
    </ligand>
</feature>
<feature type="binding site" evidence="1">
    <location>
        <position position="242"/>
    </location>
    <ligand>
        <name>NADP(+)</name>
        <dbReference type="ChEBI" id="CHEBI:58349"/>
    </ligand>
</feature>
<evidence type="ECO:0000250" key="1">
    <source>
        <dbReference type="UniProtKB" id="L0E2Z4"/>
    </source>
</evidence>
<evidence type="ECO:0000250" key="2">
    <source>
        <dbReference type="UniProtKB" id="O93868"/>
    </source>
</evidence>
<evidence type="ECO:0000269" key="3">
    <source>
    </source>
</evidence>
<evidence type="ECO:0000269" key="4">
    <source>
    </source>
</evidence>
<evidence type="ECO:0000303" key="5">
    <source>
    </source>
</evidence>
<evidence type="ECO:0000303" key="6">
    <source>
    </source>
</evidence>
<evidence type="ECO:0000305" key="7"/>
<evidence type="ECO:0000305" key="8">
    <source>
    </source>
</evidence>
<protein>
    <recommendedName>
        <fullName evidence="6">Short chain dehydrogenase pgmD</fullName>
        <ecNumber evidence="8">1.1.1.-</ecNumber>
    </recommendedName>
    <alternativeName>
        <fullName evidence="6">Pigmented naphthoquinones biosynthesis cluster protein D</fullName>
    </alternativeName>
</protein>
<reference key="1">
    <citation type="submission" date="2005-09" db="EMBL/GenBank/DDBJ databases">
        <title>Annotation of the Aspergillus terreus NIH2624 genome.</title>
        <authorList>
            <person name="Birren B.W."/>
            <person name="Lander E.S."/>
            <person name="Galagan J.E."/>
            <person name="Nusbaum C."/>
            <person name="Devon K."/>
            <person name="Henn M."/>
            <person name="Ma L.-J."/>
            <person name="Jaffe D.B."/>
            <person name="Butler J."/>
            <person name="Alvarez P."/>
            <person name="Gnerre S."/>
            <person name="Grabherr M."/>
            <person name="Kleber M."/>
            <person name="Mauceli E.W."/>
            <person name="Brockman W."/>
            <person name="Rounsley S."/>
            <person name="Young S.K."/>
            <person name="LaButti K."/>
            <person name="Pushparaj V."/>
            <person name="DeCaprio D."/>
            <person name="Crawford M."/>
            <person name="Koehrsen M."/>
            <person name="Engels R."/>
            <person name="Montgomery P."/>
            <person name="Pearson M."/>
            <person name="Howarth C."/>
            <person name="Larson L."/>
            <person name="Luoma S."/>
            <person name="White J."/>
            <person name="Alvarado L."/>
            <person name="Kodira C.D."/>
            <person name="Zeng Q."/>
            <person name="Oleary S."/>
            <person name="Yandava C."/>
            <person name="Denning D.W."/>
            <person name="Nierman W.C."/>
            <person name="Milne T."/>
            <person name="Madden K."/>
        </authorList>
    </citation>
    <scope>NUCLEOTIDE SEQUENCE [LARGE SCALE GENOMIC DNA]</scope>
    <source>
        <strain>NIH 2624 / FGSC A1156</strain>
    </source>
</reference>
<reference key="2">
    <citation type="journal article" date="2017" name="Microorganisms">
        <title>Melanisation of Aspergillus terreus-is butyrolactone I involved in the regulation of both DOPA and DHN types of pigments in submerged culture?</title>
        <authorList>
            <person name="Palonen E.K."/>
            <person name="Raina S."/>
            <person name="Brandt A."/>
            <person name="Meriluoto J."/>
            <person name="Keshavarz T."/>
            <person name="Soini J.T."/>
        </authorList>
    </citation>
    <scope>IDENTIFICATION</scope>
    <scope>FUNCTION</scope>
    <scope>INDUCTION</scope>
    <source>
        <strain>MUCL38669</strain>
    </source>
</reference>
<reference key="3">
    <citation type="journal article" date="2022" name="Fungal Genet. Biol.">
        <title>Identification of a polyketide biosynthesis gene cluster by transcriptional regulator activation in Aspergillus terreus.</title>
        <authorList>
            <person name="Tang S."/>
            <person name="Men P."/>
            <person name="Zhang W."/>
            <person name="Li H."/>
            <person name="Li Z."/>
            <person name="Huang X."/>
            <person name="Lu X."/>
        </authorList>
    </citation>
    <scope>FUNCTION</scope>
    <scope>INDUCTION</scope>
    <scope>DISRUPTION PHENOTYPE</scope>
    <scope>PATHWAY</scope>
</reference>
<gene>
    <name evidence="5" type="primary">pgmD</name>
    <name type="ORF">ATEG_06207</name>
</gene>
<name>PGMD_ASPTN</name>
<organism>
    <name type="scientific">Aspergillus terreus (strain NIH 2624 / FGSC A1156)</name>
    <dbReference type="NCBI Taxonomy" id="341663"/>
    <lineage>
        <taxon>Eukaryota</taxon>
        <taxon>Fungi</taxon>
        <taxon>Dikarya</taxon>
        <taxon>Ascomycota</taxon>
        <taxon>Pezizomycotina</taxon>
        <taxon>Eurotiomycetes</taxon>
        <taxon>Eurotiomycetidae</taxon>
        <taxon>Eurotiales</taxon>
        <taxon>Aspergillaceae</taxon>
        <taxon>Aspergillus</taxon>
        <taxon>Aspergillus subgen. Circumdati</taxon>
    </lineage>
</organism>
<accession>Q0CJC7</accession>
<sequence length="312" mass="34074">MAQPELDLSKAPAHWGMNFTETTHQQPSRRIDPSNVTFPQGYTVVVIGAGKGIGEHIAKAYVQARAENIVITSRTGSDLDRVKKELETLAQQTGQAVKVSTLVQDATKPESYTKLKDLLEEGFNGRLDTLVFCAGGGPVGTLWTPHIDETDVDEWNESIALNFTGSYYAAKYLVPLMLRPQSHGKTIVNITSAASHFTGGNITPASYSIGKLALNRFTQILGENYADQGLVVVAVHPGSSPTPGALGSMPPSLHNILTDDQGLCGAVCVWISKEKRDWISGRYICATWDMDDLESKKEEIVKEDKLKWRMAV</sequence>
<dbReference type="EC" id="1.1.1.-" evidence="8"/>
<dbReference type="EMBL" id="CH476601">
    <property type="protein sequence ID" value="EAU33968.1"/>
    <property type="molecule type" value="Genomic_DNA"/>
</dbReference>
<dbReference type="RefSeq" id="XP_001215385.1">
    <property type="nucleotide sequence ID" value="XM_001215385.1"/>
</dbReference>
<dbReference type="SMR" id="Q0CJC7"/>
<dbReference type="STRING" id="341663.Q0CJC7"/>
<dbReference type="EnsemblFungi" id="EAU33968">
    <property type="protein sequence ID" value="EAU33968"/>
    <property type="gene ID" value="ATEG_06207"/>
</dbReference>
<dbReference type="GeneID" id="4321476"/>
<dbReference type="VEuPathDB" id="FungiDB:ATEG_06207"/>
<dbReference type="eggNOG" id="KOG0725">
    <property type="taxonomic scope" value="Eukaryota"/>
</dbReference>
<dbReference type="HOGENOM" id="CLU_010194_8_0_1"/>
<dbReference type="OMA" id="WDVNELE"/>
<dbReference type="OrthoDB" id="4445405at2759"/>
<dbReference type="Proteomes" id="UP000007963">
    <property type="component" value="Unassembled WGS sequence"/>
</dbReference>
<dbReference type="GO" id="GO:0016616">
    <property type="term" value="F:oxidoreductase activity, acting on the CH-OH group of donors, NAD or NADP as acceptor"/>
    <property type="evidence" value="ECO:0007669"/>
    <property type="project" value="TreeGrafter"/>
</dbReference>
<dbReference type="CDD" id="cd05233">
    <property type="entry name" value="SDR_c"/>
    <property type="match status" value="1"/>
</dbReference>
<dbReference type="Gene3D" id="3.40.50.720">
    <property type="entry name" value="NAD(P)-binding Rossmann-like Domain"/>
    <property type="match status" value="1"/>
</dbReference>
<dbReference type="InterPro" id="IPR036291">
    <property type="entry name" value="NAD(P)-bd_dom_sf"/>
</dbReference>
<dbReference type="InterPro" id="IPR002347">
    <property type="entry name" value="SDR_fam"/>
</dbReference>
<dbReference type="PANTHER" id="PTHR42760:SF37">
    <property type="entry name" value="CLAVALDEHYDE DEHYDROGENASE"/>
    <property type="match status" value="1"/>
</dbReference>
<dbReference type="PANTHER" id="PTHR42760">
    <property type="entry name" value="SHORT-CHAIN DEHYDROGENASES/REDUCTASES FAMILY MEMBER"/>
    <property type="match status" value="1"/>
</dbReference>
<dbReference type="Pfam" id="PF00106">
    <property type="entry name" value="adh_short"/>
    <property type="match status" value="1"/>
</dbReference>
<dbReference type="PRINTS" id="PR00081">
    <property type="entry name" value="GDHRDH"/>
</dbReference>
<dbReference type="SUPFAM" id="SSF51735">
    <property type="entry name" value="NAD(P)-binding Rossmann-fold domains"/>
    <property type="match status" value="1"/>
</dbReference>
<keyword id="KW-0521">NADP</keyword>
<keyword id="KW-0560">Oxidoreductase</keyword>
<keyword id="KW-1185">Reference proteome</keyword>
<proteinExistence type="evidence at transcript level"/>
<comment type="function">
    <text evidence="3 4 8">Short chain dehydrogenase; part of the gene cluster that mediates the biosynthesis of pleosporalin A, ascomycone A, as well as a third cryptic naphthoquinone derived pigment, all responsible for the coloration of conidia (PubMed:28471414, PubMed:35351612). Essential for the production of pleosporalin A, but not the 2 other final products (PubMed:35351612). The pathway begins with the biosynthesis of the cyclized heptaketide 3-acetonyl-1,6,8-trihydroxy-2-naphthaldehyde by the NR-PKS pgmA. The C-6 hydroxyl group is further methylated by the O-methyltransferase pgmB to yield fusarubinaldehyde which is in turn oxidized by the cytochrome P450 monooxygenase pgmC at C-9. The C-1 hydroxyl group is then methylated spontaneously. Although pgmE, pgmD and pgmH are essential for the production of pleosporalin A, it is not the case for the 2 other final products and it remains difficult to assign a specific function to each enzyme. PgmF and pgmG seem not to be involved in pigment biosynthesis although they were regulated by the cluster-specific transcription factor pgmR (Probable) (PubMed:35351612).</text>
</comment>
<comment type="pathway">
    <text evidence="4">Pigment biosynthesis.</text>
</comment>
<comment type="pathway">
    <text evidence="4">Secondary metabolite biosynthesis.</text>
</comment>
<comment type="induction">
    <text evidence="3 4">Expression is significantly up-regulated at the end of late growth phase, in the presence of Butyrolactone I (PubMed:28471414). Expression is positively regulated by the pgm cluster-specific transcription factor pgmR (PubMed:35351612).</text>
</comment>
<comment type="disruption phenotype">
    <text evidence="4">Only abolishes the production of pleosporalin A but not of the 2 other final products.</text>
</comment>
<comment type="similarity">
    <text evidence="7">Belongs to the short-chain dehydrogenases/reductases (SDR) family.</text>
</comment>